<proteinExistence type="evidence at protein level"/>
<sequence length="236" mass="24704">MLSKGLKRKREEEEEKEPLAVDSWWLDPGHTAVAQAPPAVASSSLFDLSVLKLHHSLQQSEPDLRHLVLVVNTLRRIQASMAPAAALPPVPSPPAAPSVADNLLASSDAALSASMASLLEDLSHIEGLSQAPQPLADEGPPGRSIGGAAPSLGALDLLGPATGCLLDDGLEGLFEDIDTSMYDNELWAPASEGLKPGPEDGPGKEEAPELDEAELDYLMDVLVGTQALERPPGPGR</sequence>
<gene>
    <name type="primary">SERTAD1</name>
    <name type="synonym">SEI1</name>
    <name type="synonym">TRIPBR1</name>
</gene>
<name>SRTD1_HUMAN</name>
<comment type="function">
    <text>Acts at E2F-responsive promoters as coregulator to integrate signals provided by PHD- and/or bromodomain-containing transcription factors. Stimulates E2F1/TFDP1 transcriptional activity. Renders the activity of cyclin D1/CDK4 resistant to the inhibitory effects of CDKN2A/p16INK4A.</text>
</comment>
<comment type="subunit">
    <text evidence="3 4">Interacts with the PHD-bromodomain of TIF1, TRIM28/TIF1B and p300/CBP. Interacts with E2F1 and TFDP1; modulates transactivation activity of TFDP1/E2F complexes. Also interacts with CDK4.</text>
</comment>
<comment type="interaction">
    <interactant intactId="EBI-748601">
        <id>Q9UHV2</id>
    </interactant>
    <interactant intactId="EBI-8643161">
        <id>Q9NX04</id>
        <label>AIRIM</label>
    </interactant>
    <organismsDiffer>false</organismsDiffer>
    <experiments>3</experiments>
</comment>
<comment type="interaction">
    <interactant intactId="EBI-748601">
        <id>Q9UHV2</id>
    </interactant>
    <interactant intactId="EBI-746742">
        <id>O94817</id>
        <label>ATG12</label>
    </interactant>
    <organismsDiffer>false</organismsDiffer>
    <experiments>3</experiments>
</comment>
<comment type="interaction">
    <interactant intactId="EBI-748601">
        <id>Q9UHV2</id>
    </interactant>
    <interactant intactId="EBI-11977289">
        <id>Q9H503-2</id>
        <label>BANF2</label>
    </interactant>
    <organismsDiffer>false</organismsDiffer>
    <experiments>3</experiments>
</comment>
<comment type="interaction">
    <interactant intactId="EBI-748601">
        <id>Q9UHV2</id>
    </interactant>
    <interactant intactId="EBI-1020839">
        <id>Q13111</id>
        <label>CHAF1A</label>
    </interactant>
    <organismsDiffer>false</organismsDiffer>
    <experiments>3</experiments>
</comment>
<comment type="interaction">
    <interactant intactId="EBI-748601">
        <id>Q9UHV2</id>
    </interactant>
    <interactant intactId="EBI-10292696">
        <id>Q96Q77</id>
        <label>CIB3</label>
    </interactant>
    <organismsDiffer>false</organismsDiffer>
    <experiments>3</experiments>
</comment>
<comment type="interaction">
    <interactant intactId="EBI-748601">
        <id>Q9UHV2</id>
    </interactant>
    <interactant intactId="EBI-739784">
        <id>Q9BW66</id>
        <label>CINP</label>
    </interactant>
    <organismsDiffer>false</organismsDiffer>
    <experiments>3</experiments>
</comment>
<comment type="interaction">
    <interactant intactId="EBI-748601">
        <id>Q9UHV2</id>
    </interactant>
    <interactant intactId="EBI-456371">
        <id>P61024</id>
        <label>CKS1B</label>
    </interactant>
    <organismsDiffer>false</organismsDiffer>
    <experiments>3</experiments>
</comment>
<comment type="interaction">
    <interactant intactId="EBI-748601">
        <id>Q9UHV2</id>
    </interactant>
    <interactant intactId="EBI-12013806">
        <id>Q6NZ36-4</id>
        <label>FAAP20</label>
    </interactant>
    <organismsDiffer>false</organismsDiffer>
    <experiments>3</experiments>
</comment>
<comment type="interaction">
    <interactant intactId="EBI-748601">
        <id>Q9UHV2</id>
    </interactant>
    <interactant intactId="EBI-744935">
        <id>Q9BVV2</id>
        <label>FNDC11</label>
    </interactant>
    <organismsDiffer>false</organismsDiffer>
    <experiments>3</experiments>
</comment>
<comment type="interaction">
    <interactant intactId="EBI-748601">
        <id>Q9UHV2</id>
    </interactant>
    <interactant intactId="EBI-748515">
        <id>Q8IVS8</id>
        <label>GLYCTK</label>
    </interactant>
    <organismsDiffer>false</organismsDiffer>
    <experiments>3</experiments>
</comment>
<comment type="interaction">
    <interactant intactId="EBI-748601">
        <id>Q9UHV2</id>
    </interactant>
    <interactant intactId="EBI-466029">
        <id>P42858</id>
        <label>HTT</label>
    </interactant>
    <organismsDiffer>false</organismsDiffer>
    <experiments>3</experiments>
</comment>
<comment type="interaction">
    <interactant intactId="EBI-748601">
        <id>Q9UHV2</id>
    </interactant>
    <interactant intactId="EBI-750907">
        <id>Q9H8E8</id>
        <label>KAT14</label>
    </interactant>
    <organismsDiffer>false</organismsDiffer>
    <experiments>3</experiments>
</comment>
<comment type="interaction">
    <interactant intactId="EBI-748601">
        <id>Q9UHV2</id>
    </interactant>
    <interactant intactId="EBI-949319">
        <id>Q9NSK0</id>
        <label>KLC4</label>
    </interactant>
    <organismsDiffer>false</organismsDiffer>
    <experiments>3</experiments>
</comment>
<comment type="interaction">
    <interactant intactId="EBI-748601">
        <id>Q9UHV2</id>
    </interactant>
    <interactant intactId="EBI-739890">
        <id>Q9P2K6</id>
        <label>KLHL42</label>
    </interactant>
    <organismsDiffer>false</organismsDiffer>
    <experiments>4</experiments>
</comment>
<comment type="interaction">
    <interactant intactId="EBI-748601">
        <id>Q9UHV2</id>
    </interactant>
    <interactant intactId="EBI-10302990">
        <id>Q9BYU1</id>
        <label>PBX4</label>
    </interactant>
    <organismsDiffer>false</organismsDiffer>
    <experiments>3</experiments>
</comment>
<comment type="interaction">
    <interactant intactId="EBI-748601">
        <id>Q9UHV2</id>
    </interactant>
    <interactant intactId="EBI-79165">
        <id>Q9NRD5</id>
        <label>PICK1</label>
    </interactant>
    <organismsDiffer>false</organismsDiffer>
    <experiments>3</experiments>
</comment>
<comment type="interaction">
    <interactant intactId="EBI-748601">
        <id>Q9UHV2</id>
    </interactant>
    <interactant intactId="EBI-10232538">
        <id>Q8WWB5</id>
        <label>PIH1D2</label>
    </interactant>
    <organismsDiffer>false</organismsDiffer>
    <experiments>3</experiments>
</comment>
<comment type="interaction">
    <interactant intactId="EBI-748601">
        <id>Q9UHV2</id>
    </interactant>
    <interactant intactId="EBI-2798416">
        <id>Q99633</id>
        <label>PRPF18</label>
    </interactant>
    <organismsDiffer>false</organismsDiffer>
    <experiments>3</experiments>
</comment>
<comment type="interaction">
    <interactant intactId="EBI-748601">
        <id>Q9UHV2</id>
    </interactant>
    <interactant intactId="EBI-11974061">
        <id>Q9UIG4</id>
        <label>PSORS1C2</label>
    </interactant>
    <organismsDiffer>false</organismsDiffer>
    <experiments>3</experiments>
</comment>
<comment type="interaction">
    <interactant intactId="EBI-748601">
        <id>Q9UHV2</id>
    </interactant>
    <interactant intactId="EBI-10320311">
        <id>Q9UDX3</id>
        <label>SEC14L4</label>
    </interactant>
    <organismsDiffer>false</organismsDiffer>
    <experiments>3</experiments>
</comment>
<comment type="interaction">
    <interactant intactId="EBI-748601">
        <id>Q9UHV2</id>
    </interactant>
    <interactant intactId="EBI-1268586">
        <id>Q8WTS6</id>
        <label>SETD7</label>
    </interactant>
    <organismsDiffer>false</organismsDiffer>
    <experiments>2</experiments>
</comment>
<comment type="interaction">
    <interactant intactId="EBI-748601">
        <id>Q9UHV2</id>
    </interactant>
    <interactant intactId="EBI-12879730">
        <id>Q7RTT5</id>
        <label>SSX7</label>
    </interactant>
    <organismsDiffer>false</organismsDiffer>
    <experiments>3</experiments>
</comment>
<comment type="interaction">
    <interactant intactId="EBI-748601">
        <id>Q9UHV2</id>
    </interactant>
    <interactant intactId="EBI-11741890">
        <id>Q86VK4-3</id>
        <label>ZNF410</label>
    </interactant>
    <organismsDiffer>false</organismsDiffer>
    <experiments>3</experiments>
</comment>
<comment type="interaction">
    <interactant intactId="EBI-748601">
        <id>Q9UHV2</id>
    </interactant>
    <interactant intactId="EBI-25492395">
        <id>PRO_0000449633</id>
        <label>rep</label>
        <dbReference type="UniProtKB" id="P0DTD1"/>
    </interactant>
    <organismsDiffer>true</organismsDiffer>
    <experiments>3</experiments>
</comment>
<comment type="developmental stage">
    <text evidence="4 5">Transcript levels remain constant in all phases of the cell cycle. In contrast, protein levels accumulate at the G1/S phase boundary and decrease progressively through S phase until G2/M phase is reached.</text>
</comment>
<comment type="PTM">
    <text evidence="5">Polyubiquitinated, which promotes proteasomal degradation.</text>
</comment>
<accession>Q9UHV2</accession>
<accession>Q9BUE7</accession>
<reference key="1">
    <citation type="journal article" date="1999" name="Genes Dev.">
        <title>Regulation of CDK4 activity by a novel CDK4-binding protein, p34(SEI-1).</title>
        <authorList>
            <person name="Sugimoto M."/>
            <person name="Nakamura T."/>
            <person name="Ohtani N."/>
            <person name="Hampson L."/>
            <person name="Hampson I.N."/>
            <person name="Shimamoto A."/>
            <person name="Furuichi Y."/>
            <person name="Okumura K."/>
            <person name="Niwa S."/>
            <person name="Taya Y."/>
            <person name="Hara E."/>
        </authorList>
    </citation>
    <scope>NUCLEOTIDE SEQUENCE [MRNA]</scope>
    <scope>INTERACTION WITH CDK4</scope>
    <scope>VARIANT ALA-31</scope>
</reference>
<reference key="2">
    <citation type="journal article" date="2001" name="EMBO J.">
        <title>TRIP-Br: a novel family of PHD zinc finger- and bromodomain-interacting proteins that regulate the transcriptional activity of E2F-1/DP-1.</title>
        <authorList>
            <person name="Hsu S.-I."/>
            <person name="Yang C.M."/>
            <person name="Sim K.G."/>
            <person name="Hentschel D.M."/>
            <person name="O'Leary E."/>
            <person name="Bonventre J.V."/>
        </authorList>
    </citation>
    <scope>NUCLEOTIDE SEQUENCE [MRNA]</scope>
    <scope>INTERACTION WITH E2F1 AND TFDP1</scope>
    <scope>DEVELOPMENTAL STAGE</scope>
    <scope>VARIANT ALA-31</scope>
</reference>
<reference key="3">
    <citation type="submission" date="2002-07" db="EMBL/GenBank/DDBJ databases">
        <authorList>
            <consortium name="NIEHS SNPs program"/>
        </authorList>
    </citation>
    <scope>NUCLEOTIDE SEQUENCE [GENOMIC DNA]</scope>
    <scope>VARIANT ALA-31</scope>
</reference>
<reference key="4">
    <citation type="journal article" date="2004" name="Genome Res.">
        <title>The status, quality, and expansion of the NIH full-length cDNA project: the Mammalian Gene Collection (MGC).</title>
        <authorList>
            <consortium name="The MGC Project Team"/>
        </authorList>
    </citation>
    <scope>NUCLEOTIDE SEQUENCE [LARGE SCALE MRNA]</scope>
    <source>
        <tissue>Uterus</tissue>
    </source>
</reference>
<reference key="5">
    <citation type="journal article" date="2008" name="J. Biol. Chem.">
        <title>CRM1-mediated nuclear export is required for 26 S proteasome-dependent degradation of the TRIP-Br2 proto-oncoprotein.</title>
        <authorList>
            <person name="Cheong J.K."/>
            <person name="Gunaratnam L."/>
            <person name="Hsu S.I."/>
        </authorList>
    </citation>
    <scope>DEVELOPMENTAL STAGE</scope>
    <scope>UBIQUITINATION</scope>
</reference>
<organism>
    <name type="scientific">Homo sapiens</name>
    <name type="common">Human</name>
    <dbReference type="NCBI Taxonomy" id="9606"/>
    <lineage>
        <taxon>Eukaryota</taxon>
        <taxon>Metazoa</taxon>
        <taxon>Chordata</taxon>
        <taxon>Craniata</taxon>
        <taxon>Vertebrata</taxon>
        <taxon>Euteleostomi</taxon>
        <taxon>Mammalia</taxon>
        <taxon>Eutheria</taxon>
        <taxon>Euarchontoglires</taxon>
        <taxon>Primates</taxon>
        <taxon>Haplorrhini</taxon>
        <taxon>Catarrhini</taxon>
        <taxon>Hominidae</taxon>
        <taxon>Homo</taxon>
    </lineage>
</organism>
<protein>
    <recommendedName>
        <fullName>SERTA domain-containing protein 1</fullName>
    </recommendedName>
    <alternativeName>
        <fullName>CDK4-binding protein p34SEI1</fullName>
        <shortName>SEI-1</shortName>
        <shortName>p34(SEI-1)</shortName>
    </alternativeName>
    <alternativeName>
        <fullName>Transcriptional regulator interacting with the PHD-bromodomain 1</fullName>
        <shortName>TRIP-Br1</shortName>
    </alternativeName>
</protein>
<feature type="chain" id="PRO_0000191611" description="SERTA domain-containing protein 1">
    <location>
        <begin position="1"/>
        <end position="236"/>
    </location>
</feature>
<feature type="domain" description="SERTA" evidence="1">
    <location>
        <begin position="38"/>
        <end position="85"/>
    </location>
</feature>
<feature type="region of interest" description="Disordered" evidence="2">
    <location>
        <begin position="1"/>
        <end position="20"/>
    </location>
</feature>
<feature type="region of interest" description="Disordered" evidence="2">
    <location>
        <begin position="189"/>
        <end position="211"/>
    </location>
</feature>
<feature type="compositionally biased region" description="Basic and acidic residues" evidence="2">
    <location>
        <begin position="197"/>
        <end position="207"/>
    </location>
</feature>
<feature type="sequence variant" id="VAR_015881" description="In dbSNP:rs268687." evidence="3 4 6">
    <original>T</original>
    <variation>A</variation>
    <location>
        <position position="31"/>
    </location>
</feature>
<keyword id="KW-1267">Proteomics identification</keyword>
<keyword id="KW-1185">Reference proteome</keyword>
<keyword id="KW-0804">Transcription</keyword>
<keyword id="KW-0805">Transcription regulation</keyword>
<keyword id="KW-0832">Ubl conjugation</keyword>
<dbReference type="EMBL" id="AF117959">
    <property type="protein sequence ID" value="AAF08349.1"/>
    <property type="molecule type" value="mRNA"/>
</dbReference>
<dbReference type="EMBL" id="AF366402">
    <property type="protein sequence ID" value="AAK52831.1"/>
    <property type="molecule type" value="mRNA"/>
</dbReference>
<dbReference type="EMBL" id="AY130860">
    <property type="protein sequence ID" value="AAM77800.1"/>
    <property type="molecule type" value="Genomic_DNA"/>
</dbReference>
<dbReference type="EMBL" id="BC002670">
    <property type="protein sequence ID" value="AAH02670.1"/>
    <property type="molecule type" value="mRNA"/>
</dbReference>
<dbReference type="CCDS" id="CCDS12557.1"/>
<dbReference type="RefSeq" id="NP_037508.2">
    <property type="nucleotide sequence ID" value="NM_013376.4"/>
</dbReference>
<dbReference type="BioGRID" id="118987">
    <property type="interactions" value="75"/>
</dbReference>
<dbReference type="CORUM" id="Q9UHV2"/>
<dbReference type="FunCoup" id="Q9UHV2">
    <property type="interactions" value="563"/>
</dbReference>
<dbReference type="IntAct" id="Q9UHV2">
    <property type="interactions" value="78"/>
</dbReference>
<dbReference type="MINT" id="Q9UHV2"/>
<dbReference type="STRING" id="9606.ENSP00000350633"/>
<dbReference type="BioMuta" id="SERTAD1"/>
<dbReference type="DMDM" id="67477469"/>
<dbReference type="MassIVE" id="Q9UHV2"/>
<dbReference type="PaxDb" id="9606-ENSP00000350633"/>
<dbReference type="PeptideAtlas" id="Q9UHV2"/>
<dbReference type="Antibodypedia" id="16970">
    <property type="antibodies" value="191 antibodies from 31 providers"/>
</dbReference>
<dbReference type="DNASU" id="29950"/>
<dbReference type="Ensembl" id="ENST00000357949.5">
    <property type="protein sequence ID" value="ENSP00000350633.4"/>
    <property type="gene ID" value="ENSG00000197019.5"/>
</dbReference>
<dbReference type="GeneID" id="29950"/>
<dbReference type="KEGG" id="hsa:29950"/>
<dbReference type="MANE-Select" id="ENST00000357949.5">
    <property type="protein sequence ID" value="ENSP00000350633.4"/>
    <property type="RefSeq nucleotide sequence ID" value="NM_013376.4"/>
    <property type="RefSeq protein sequence ID" value="NP_037508.2"/>
</dbReference>
<dbReference type="UCSC" id="uc002ont.6">
    <property type="organism name" value="human"/>
</dbReference>
<dbReference type="AGR" id="HGNC:17932"/>
<dbReference type="CTD" id="29950"/>
<dbReference type="DisGeNET" id="29950"/>
<dbReference type="GeneCards" id="SERTAD1"/>
<dbReference type="HGNC" id="HGNC:17932">
    <property type="gene designation" value="SERTAD1"/>
</dbReference>
<dbReference type="HPA" id="ENSG00000197019">
    <property type="expression patterns" value="Low tissue specificity"/>
</dbReference>
<dbReference type="MIM" id="617850">
    <property type="type" value="gene"/>
</dbReference>
<dbReference type="neXtProt" id="NX_Q9UHV2"/>
<dbReference type="OpenTargets" id="ENSG00000197019"/>
<dbReference type="PharmGKB" id="PA134957023"/>
<dbReference type="VEuPathDB" id="HostDB:ENSG00000197019"/>
<dbReference type="eggNOG" id="ENOG502S52T">
    <property type="taxonomic scope" value="Eukaryota"/>
</dbReference>
<dbReference type="GeneTree" id="ENSGT00940000154733"/>
<dbReference type="HOGENOM" id="CLU_1229598_0_0_1"/>
<dbReference type="InParanoid" id="Q9UHV2"/>
<dbReference type="OMA" id="LAVDTWW"/>
<dbReference type="OrthoDB" id="6083860at2759"/>
<dbReference type="PAN-GO" id="Q9UHV2">
    <property type="GO annotations" value="2 GO annotations based on evolutionary models"/>
</dbReference>
<dbReference type="PhylomeDB" id="Q9UHV2"/>
<dbReference type="TreeFam" id="TF101069"/>
<dbReference type="PathwayCommons" id="Q9UHV2"/>
<dbReference type="SignaLink" id="Q9UHV2"/>
<dbReference type="BioGRID-ORCS" id="29950">
    <property type="hits" value="13 hits in 1161 CRISPR screens"/>
</dbReference>
<dbReference type="ChiTaRS" id="SERTAD1">
    <property type="organism name" value="human"/>
</dbReference>
<dbReference type="GeneWiki" id="SERTAD1"/>
<dbReference type="GenomeRNAi" id="29950"/>
<dbReference type="Pharos" id="Q9UHV2">
    <property type="development level" value="Tbio"/>
</dbReference>
<dbReference type="PRO" id="PR:Q9UHV2"/>
<dbReference type="Proteomes" id="UP000005640">
    <property type="component" value="Chromosome 19"/>
</dbReference>
<dbReference type="RNAct" id="Q9UHV2">
    <property type="molecule type" value="protein"/>
</dbReference>
<dbReference type="Bgee" id="ENSG00000197019">
    <property type="expression patterns" value="Expressed in vena cava and 181 other cell types or tissues"/>
</dbReference>
<dbReference type="ExpressionAtlas" id="Q9UHV2">
    <property type="expression patterns" value="baseline and differential"/>
</dbReference>
<dbReference type="GO" id="GO:0005737">
    <property type="term" value="C:cytoplasm"/>
    <property type="evidence" value="ECO:0000318"/>
    <property type="project" value="GO_Central"/>
</dbReference>
<dbReference type="GO" id="GO:0005634">
    <property type="term" value="C:nucleus"/>
    <property type="evidence" value="ECO:0000318"/>
    <property type="project" value="GO_Central"/>
</dbReference>
<dbReference type="GO" id="GO:0016528">
    <property type="term" value="C:sarcoplasm"/>
    <property type="evidence" value="ECO:0007669"/>
    <property type="project" value="Ensembl"/>
</dbReference>
<dbReference type="GO" id="GO:0003713">
    <property type="term" value="F:transcription coactivator activity"/>
    <property type="evidence" value="ECO:0000318"/>
    <property type="project" value="GO_Central"/>
</dbReference>
<dbReference type="GO" id="GO:0008284">
    <property type="term" value="P:positive regulation of cell population proliferation"/>
    <property type="evidence" value="ECO:0000304"/>
    <property type="project" value="ProtInc"/>
</dbReference>
<dbReference type="GO" id="GO:0045944">
    <property type="term" value="P:positive regulation of transcription by RNA polymerase II"/>
    <property type="evidence" value="ECO:0007669"/>
    <property type="project" value="Ensembl"/>
</dbReference>
<dbReference type="GO" id="GO:0000079">
    <property type="term" value="P:regulation of cyclin-dependent protein serine/threonine kinase activity"/>
    <property type="evidence" value="ECO:0000304"/>
    <property type="project" value="ProtInc"/>
</dbReference>
<dbReference type="InterPro" id="IPR052262">
    <property type="entry name" value="E2F-SERTA_domain_protein"/>
</dbReference>
<dbReference type="InterPro" id="IPR009263">
    <property type="entry name" value="SERTA_dom"/>
</dbReference>
<dbReference type="PANTHER" id="PTHR16277">
    <property type="entry name" value="CELL DIVISION CYCLE ASSOCIATED PROTEIN 4/SERTA DOMAIN-CONTAINING PROTEIN 2"/>
    <property type="match status" value="1"/>
</dbReference>
<dbReference type="PANTHER" id="PTHR16277:SF12">
    <property type="entry name" value="SERTA DOMAIN-CONTAINING PROTEIN 1"/>
    <property type="match status" value="1"/>
</dbReference>
<dbReference type="Pfam" id="PF06031">
    <property type="entry name" value="SERTA"/>
    <property type="match status" value="1"/>
</dbReference>
<dbReference type="PROSITE" id="PS51053">
    <property type="entry name" value="SERTA"/>
    <property type="match status" value="1"/>
</dbReference>
<evidence type="ECO:0000255" key="1">
    <source>
        <dbReference type="PROSITE-ProRule" id="PRU00396"/>
    </source>
</evidence>
<evidence type="ECO:0000256" key="2">
    <source>
        <dbReference type="SAM" id="MobiDB-lite"/>
    </source>
</evidence>
<evidence type="ECO:0000269" key="3">
    <source>
    </source>
</evidence>
<evidence type="ECO:0000269" key="4">
    <source>
    </source>
</evidence>
<evidence type="ECO:0000269" key="5">
    <source>
    </source>
</evidence>
<evidence type="ECO:0000269" key="6">
    <source ref="3"/>
</evidence>